<name>HTPX_SHESM</name>
<reference key="1">
    <citation type="submission" date="2006-08" db="EMBL/GenBank/DDBJ databases">
        <title>Complete sequence of Shewanella sp. MR-4.</title>
        <authorList>
            <consortium name="US DOE Joint Genome Institute"/>
            <person name="Copeland A."/>
            <person name="Lucas S."/>
            <person name="Lapidus A."/>
            <person name="Barry K."/>
            <person name="Detter J.C."/>
            <person name="Glavina del Rio T."/>
            <person name="Hammon N."/>
            <person name="Israni S."/>
            <person name="Dalin E."/>
            <person name="Tice H."/>
            <person name="Pitluck S."/>
            <person name="Kiss H."/>
            <person name="Brettin T."/>
            <person name="Bruce D."/>
            <person name="Han C."/>
            <person name="Tapia R."/>
            <person name="Gilna P."/>
            <person name="Schmutz J."/>
            <person name="Larimer F."/>
            <person name="Land M."/>
            <person name="Hauser L."/>
            <person name="Kyrpides N."/>
            <person name="Mikhailova N."/>
            <person name="Nealson K."/>
            <person name="Konstantinidis K."/>
            <person name="Klappenbach J."/>
            <person name="Tiedje J."/>
            <person name="Richardson P."/>
        </authorList>
    </citation>
    <scope>NUCLEOTIDE SEQUENCE [LARGE SCALE GENOMIC DNA]</scope>
    <source>
        <strain>MR-4</strain>
    </source>
</reference>
<comment type="cofactor">
    <cofactor evidence="1">
        <name>Zn(2+)</name>
        <dbReference type="ChEBI" id="CHEBI:29105"/>
    </cofactor>
    <text evidence="1">Binds 1 zinc ion per subunit.</text>
</comment>
<comment type="subcellular location">
    <subcellularLocation>
        <location evidence="1">Cell inner membrane</location>
        <topology evidence="1">Multi-pass membrane protein</topology>
    </subcellularLocation>
</comment>
<comment type="similarity">
    <text evidence="1">Belongs to the peptidase M48B family.</text>
</comment>
<organism>
    <name type="scientific">Shewanella sp. (strain MR-4)</name>
    <dbReference type="NCBI Taxonomy" id="60480"/>
    <lineage>
        <taxon>Bacteria</taxon>
        <taxon>Pseudomonadati</taxon>
        <taxon>Pseudomonadota</taxon>
        <taxon>Gammaproteobacteria</taxon>
        <taxon>Alteromonadales</taxon>
        <taxon>Shewanellaceae</taxon>
        <taxon>Shewanella</taxon>
    </lineage>
</organism>
<sequence length="287" mass="30902">MKRIFLLIATNLAVLLVASIVMSILGVNTSTMGGLLVFAAIFGFGGAFISLAISKWMAKKTMGCEVITTPRDSTERWLLETVARQAQQAGIKMPEVAIYQSPEMNAFATGPSKDNSLVAVSTGLLYGMSQDEVEGVLAHEVSHVANGDMVTLTLIQGVVNTFVIFAARVVAGIINNFVSSNDEEGEGLGMFAYMAVVFVLDMLFGILASIIVAYFSRIREYRADEGAARLAGKHKMIAALERLRQGPESSAMPAQMSAFGINGKRSMAELMMSHPPLEKRIAALQTR</sequence>
<dbReference type="EC" id="3.4.24.-" evidence="1"/>
<dbReference type="EMBL" id="CP000446">
    <property type="protein sequence ID" value="ABI39422.1"/>
    <property type="molecule type" value="Genomic_DNA"/>
</dbReference>
<dbReference type="RefSeq" id="WP_011623112.1">
    <property type="nucleotide sequence ID" value="NC_008321.1"/>
</dbReference>
<dbReference type="SMR" id="Q0HHP5"/>
<dbReference type="MEROPS" id="M48.002"/>
<dbReference type="KEGG" id="she:Shewmr4_2351"/>
<dbReference type="HOGENOM" id="CLU_042266_1_0_6"/>
<dbReference type="GO" id="GO:0005886">
    <property type="term" value="C:plasma membrane"/>
    <property type="evidence" value="ECO:0007669"/>
    <property type="project" value="UniProtKB-SubCell"/>
</dbReference>
<dbReference type="GO" id="GO:0004222">
    <property type="term" value="F:metalloendopeptidase activity"/>
    <property type="evidence" value="ECO:0007669"/>
    <property type="project" value="UniProtKB-UniRule"/>
</dbReference>
<dbReference type="GO" id="GO:0008270">
    <property type="term" value="F:zinc ion binding"/>
    <property type="evidence" value="ECO:0007669"/>
    <property type="project" value="UniProtKB-UniRule"/>
</dbReference>
<dbReference type="GO" id="GO:0006508">
    <property type="term" value="P:proteolysis"/>
    <property type="evidence" value="ECO:0007669"/>
    <property type="project" value="UniProtKB-KW"/>
</dbReference>
<dbReference type="CDD" id="cd07335">
    <property type="entry name" value="M48B_HtpX_like"/>
    <property type="match status" value="1"/>
</dbReference>
<dbReference type="FunFam" id="3.30.2010.10:FF:000001">
    <property type="entry name" value="Protease HtpX"/>
    <property type="match status" value="1"/>
</dbReference>
<dbReference type="Gene3D" id="3.30.2010.10">
    <property type="entry name" value="Metalloproteases ('zincins'), catalytic domain"/>
    <property type="match status" value="1"/>
</dbReference>
<dbReference type="HAMAP" id="MF_00188">
    <property type="entry name" value="Pept_M48_protease_HtpX"/>
    <property type="match status" value="1"/>
</dbReference>
<dbReference type="InterPro" id="IPR050083">
    <property type="entry name" value="HtpX_protease"/>
</dbReference>
<dbReference type="InterPro" id="IPR022919">
    <property type="entry name" value="Pept_M48_protease_HtpX"/>
</dbReference>
<dbReference type="InterPro" id="IPR001915">
    <property type="entry name" value="Peptidase_M48"/>
</dbReference>
<dbReference type="NCBIfam" id="NF003965">
    <property type="entry name" value="PRK05457.1"/>
    <property type="match status" value="1"/>
</dbReference>
<dbReference type="PANTHER" id="PTHR43221">
    <property type="entry name" value="PROTEASE HTPX"/>
    <property type="match status" value="1"/>
</dbReference>
<dbReference type="PANTHER" id="PTHR43221:SF1">
    <property type="entry name" value="PROTEASE HTPX"/>
    <property type="match status" value="1"/>
</dbReference>
<dbReference type="Pfam" id="PF01435">
    <property type="entry name" value="Peptidase_M48"/>
    <property type="match status" value="1"/>
</dbReference>
<accession>Q0HHP5</accession>
<keyword id="KW-0997">Cell inner membrane</keyword>
<keyword id="KW-1003">Cell membrane</keyword>
<keyword id="KW-0378">Hydrolase</keyword>
<keyword id="KW-0472">Membrane</keyword>
<keyword id="KW-0479">Metal-binding</keyword>
<keyword id="KW-0482">Metalloprotease</keyword>
<keyword id="KW-0645">Protease</keyword>
<keyword id="KW-0812">Transmembrane</keyword>
<keyword id="KW-1133">Transmembrane helix</keyword>
<keyword id="KW-0862">Zinc</keyword>
<evidence type="ECO:0000255" key="1">
    <source>
        <dbReference type="HAMAP-Rule" id="MF_00188"/>
    </source>
</evidence>
<gene>
    <name evidence="1" type="primary">htpX</name>
    <name type="ordered locus">Shewmr4_2351</name>
</gene>
<proteinExistence type="inferred from homology"/>
<feature type="chain" id="PRO_1000020939" description="Protease HtpX">
    <location>
        <begin position="1"/>
        <end position="287"/>
    </location>
</feature>
<feature type="transmembrane region" description="Helical" evidence="1">
    <location>
        <begin position="4"/>
        <end position="24"/>
    </location>
</feature>
<feature type="transmembrane region" description="Helical" evidence="1">
    <location>
        <begin position="33"/>
        <end position="53"/>
    </location>
</feature>
<feature type="transmembrane region" description="Helical" evidence="1">
    <location>
        <begin position="154"/>
        <end position="174"/>
    </location>
</feature>
<feature type="transmembrane region" description="Helical" evidence="1">
    <location>
        <begin position="195"/>
        <end position="215"/>
    </location>
</feature>
<feature type="active site" evidence="1">
    <location>
        <position position="140"/>
    </location>
</feature>
<feature type="binding site" evidence="1">
    <location>
        <position position="139"/>
    </location>
    <ligand>
        <name>Zn(2+)</name>
        <dbReference type="ChEBI" id="CHEBI:29105"/>
        <note>catalytic</note>
    </ligand>
</feature>
<feature type="binding site" evidence="1">
    <location>
        <position position="143"/>
    </location>
    <ligand>
        <name>Zn(2+)</name>
        <dbReference type="ChEBI" id="CHEBI:29105"/>
        <note>catalytic</note>
    </ligand>
</feature>
<feature type="binding site" evidence="1">
    <location>
        <position position="220"/>
    </location>
    <ligand>
        <name>Zn(2+)</name>
        <dbReference type="ChEBI" id="CHEBI:29105"/>
        <note>catalytic</note>
    </ligand>
</feature>
<protein>
    <recommendedName>
        <fullName evidence="1">Protease HtpX</fullName>
        <ecNumber evidence="1">3.4.24.-</ecNumber>
    </recommendedName>
    <alternativeName>
        <fullName evidence="1">Heat shock protein HtpX</fullName>
    </alternativeName>
</protein>